<gene>
    <name evidence="1" type="primary">nusB</name>
    <name type="ordered locus">XC_3536</name>
</gene>
<evidence type="ECO:0000255" key="1">
    <source>
        <dbReference type="HAMAP-Rule" id="MF_00073"/>
    </source>
</evidence>
<protein>
    <recommendedName>
        <fullName evidence="1">Transcription antitermination protein NusB</fullName>
    </recommendedName>
    <alternativeName>
        <fullName evidence="1">Antitermination factor NusB</fullName>
    </alternativeName>
</protein>
<proteinExistence type="inferred from homology"/>
<comment type="function">
    <text evidence="1">Involved in transcription antitermination. Required for transcription of ribosomal RNA (rRNA) genes. Binds specifically to the boxA antiterminator sequence of the ribosomal RNA (rrn) operons.</text>
</comment>
<comment type="similarity">
    <text evidence="1">Belongs to the NusB family.</text>
</comment>
<feature type="chain" id="PRO_0000265625" description="Transcription antitermination protein NusB">
    <location>
        <begin position="1"/>
        <end position="159"/>
    </location>
</feature>
<name>NUSB_XANC8</name>
<sequence>MSKPGGHARHGRRDGIDPVLRSRARRRALQAVYAWQIAGGFAKQVIAQFAHEQAHEVADLAYFESLVEGVLSNRSELDTALTPYLDRGVEEVDAIERAVLRLAAYELLYRQDVPYRVVINEAIETAKRFGSEHGHTYVNGVLDRAAVEWRKMESGASGA</sequence>
<keyword id="KW-0694">RNA-binding</keyword>
<keyword id="KW-0804">Transcription</keyword>
<keyword id="KW-0889">Transcription antitermination</keyword>
<keyword id="KW-0805">Transcription regulation</keyword>
<dbReference type="EMBL" id="CP000050">
    <property type="protein sequence ID" value="AAY50579.1"/>
    <property type="molecule type" value="Genomic_DNA"/>
</dbReference>
<dbReference type="RefSeq" id="WP_011035937.1">
    <property type="nucleotide sequence ID" value="NZ_CP155948.1"/>
</dbReference>
<dbReference type="SMR" id="Q4UQU4"/>
<dbReference type="KEGG" id="xcb:XC_3536"/>
<dbReference type="HOGENOM" id="CLU_087843_4_1_6"/>
<dbReference type="Proteomes" id="UP000000420">
    <property type="component" value="Chromosome"/>
</dbReference>
<dbReference type="GO" id="GO:0005829">
    <property type="term" value="C:cytosol"/>
    <property type="evidence" value="ECO:0007669"/>
    <property type="project" value="TreeGrafter"/>
</dbReference>
<dbReference type="GO" id="GO:0003723">
    <property type="term" value="F:RNA binding"/>
    <property type="evidence" value="ECO:0007669"/>
    <property type="project" value="UniProtKB-UniRule"/>
</dbReference>
<dbReference type="GO" id="GO:0006353">
    <property type="term" value="P:DNA-templated transcription termination"/>
    <property type="evidence" value="ECO:0007669"/>
    <property type="project" value="UniProtKB-UniRule"/>
</dbReference>
<dbReference type="GO" id="GO:0031564">
    <property type="term" value="P:transcription antitermination"/>
    <property type="evidence" value="ECO:0007669"/>
    <property type="project" value="UniProtKB-KW"/>
</dbReference>
<dbReference type="FunFam" id="1.10.940.10:FF:000001">
    <property type="entry name" value="Transcription antitermination factor NusB"/>
    <property type="match status" value="1"/>
</dbReference>
<dbReference type="Gene3D" id="1.10.940.10">
    <property type="entry name" value="NusB-like"/>
    <property type="match status" value="1"/>
</dbReference>
<dbReference type="HAMAP" id="MF_00073">
    <property type="entry name" value="NusB"/>
    <property type="match status" value="1"/>
</dbReference>
<dbReference type="InterPro" id="IPR035926">
    <property type="entry name" value="NusB-like_sf"/>
</dbReference>
<dbReference type="InterPro" id="IPR011605">
    <property type="entry name" value="NusB_fam"/>
</dbReference>
<dbReference type="InterPro" id="IPR006027">
    <property type="entry name" value="NusB_RsmB_TIM44"/>
</dbReference>
<dbReference type="NCBIfam" id="TIGR01951">
    <property type="entry name" value="nusB"/>
    <property type="match status" value="1"/>
</dbReference>
<dbReference type="PANTHER" id="PTHR11078:SF3">
    <property type="entry name" value="ANTITERMINATION NUSB DOMAIN-CONTAINING PROTEIN"/>
    <property type="match status" value="1"/>
</dbReference>
<dbReference type="PANTHER" id="PTHR11078">
    <property type="entry name" value="N UTILIZATION SUBSTANCE PROTEIN B-RELATED"/>
    <property type="match status" value="1"/>
</dbReference>
<dbReference type="Pfam" id="PF01029">
    <property type="entry name" value="NusB"/>
    <property type="match status" value="1"/>
</dbReference>
<dbReference type="SUPFAM" id="SSF48013">
    <property type="entry name" value="NusB-like"/>
    <property type="match status" value="1"/>
</dbReference>
<accession>Q4UQU4</accession>
<reference key="1">
    <citation type="journal article" date="2005" name="Genome Res.">
        <title>Comparative and functional genomic analyses of the pathogenicity of phytopathogen Xanthomonas campestris pv. campestris.</title>
        <authorList>
            <person name="Qian W."/>
            <person name="Jia Y."/>
            <person name="Ren S.-X."/>
            <person name="He Y.-Q."/>
            <person name="Feng J.-X."/>
            <person name="Lu L.-F."/>
            <person name="Sun Q."/>
            <person name="Ying G."/>
            <person name="Tang D.-J."/>
            <person name="Tang H."/>
            <person name="Wu W."/>
            <person name="Hao P."/>
            <person name="Wang L."/>
            <person name="Jiang B.-L."/>
            <person name="Zeng S."/>
            <person name="Gu W.-Y."/>
            <person name="Lu G."/>
            <person name="Rong L."/>
            <person name="Tian Y."/>
            <person name="Yao Z."/>
            <person name="Fu G."/>
            <person name="Chen B."/>
            <person name="Fang R."/>
            <person name="Qiang B."/>
            <person name="Chen Z."/>
            <person name="Zhao G.-P."/>
            <person name="Tang J.-L."/>
            <person name="He C."/>
        </authorList>
    </citation>
    <scope>NUCLEOTIDE SEQUENCE [LARGE SCALE GENOMIC DNA]</scope>
    <source>
        <strain>8004</strain>
    </source>
</reference>
<organism>
    <name type="scientific">Xanthomonas campestris pv. campestris (strain 8004)</name>
    <dbReference type="NCBI Taxonomy" id="314565"/>
    <lineage>
        <taxon>Bacteria</taxon>
        <taxon>Pseudomonadati</taxon>
        <taxon>Pseudomonadota</taxon>
        <taxon>Gammaproteobacteria</taxon>
        <taxon>Lysobacterales</taxon>
        <taxon>Lysobacteraceae</taxon>
        <taxon>Xanthomonas</taxon>
    </lineage>
</organism>